<feature type="chain" id="PRO_0000177944" description="DNA mismatch repair protein MutL">
    <location>
        <begin position="1"/>
        <end position="615"/>
    </location>
</feature>
<feature type="region of interest" description="Disordered" evidence="2">
    <location>
        <begin position="363"/>
        <end position="397"/>
    </location>
</feature>
<feature type="compositionally biased region" description="Low complexity" evidence="2">
    <location>
        <begin position="378"/>
        <end position="391"/>
    </location>
</feature>
<comment type="function">
    <text evidence="1">This protein is involved in the repair of mismatches in DNA. It is required for dam-dependent methyl-directed DNA mismatch repair. May act as a 'molecular matchmaker', a protein that promotes the formation of a stable complex between two or more DNA-binding proteins in an ATP-dependent manner without itself being part of a final effector complex.</text>
</comment>
<comment type="similarity">
    <text evidence="1">Belongs to the DNA mismatch repair MutL/HexB family.</text>
</comment>
<organism>
    <name type="scientific">Escherichia coli O157:H7</name>
    <dbReference type="NCBI Taxonomy" id="83334"/>
    <lineage>
        <taxon>Bacteria</taxon>
        <taxon>Pseudomonadati</taxon>
        <taxon>Pseudomonadota</taxon>
        <taxon>Gammaproteobacteria</taxon>
        <taxon>Enterobacterales</taxon>
        <taxon>Enterobacteriaceae</taxon>
        <taxon>Escherichia</taxon>
    </lineage>
</organism>
<sequence length="615" mass="67922">MPIQVLPPQLANQIAAGEVVERPASVVKELVENSLDAGATRIDIDIERGGAKLIRIRDNGCGIKKDELALALARHATSKIASLDDLEAIISLGFRGEALASISSVSRLTLTSRTAEQQEAWQAYAEGRDMDVTVKPAAHPVGTTLEVLDLFYNTPARRKFLRTEKTEFNHIDEIIRRIALARFDVTINLSHNGKIVRQYRAVPEGGQKERRLGAICGTAFLEQALAIEWQHGDLTLRGWVADPNHTTPALAEIQYCYVNGRMMRDRLINHAIRQACEDKLGADQQPAFVLYLEIDPHQVDVNVHPAKHEVRFHQSRLVHDFIYQGVLSVLQQQLETPLPLDDEPQPAPRPIPENRVAAGRNHFAEPAVREPVAPRYTPAPASGSRPAAPWPNAQPGYQKQQGEVYRQLLQTPAPMQKPKAPEPQEPALAANSQSFGRVLTIVHSDCALLERDGNISLLALPVAERWLRQVQLTPGEAPVCAQPLLIPLRLKVSGEEKSALEKAQSALAELGIDFQSDAQHVTIRAVPLPLRQQNLQILIPELIGYLAKQSVFEPGNIAQWIARNLMSENAQWSMAQAITLLADVERLCPQLVKTPPGGLLQSVDLHPAIKALKDE</sequence>
<name>MUTL_ECO57</name>
<dbReference type="EMBL" id="AE005174">
    <property type="protein sequence ID" value="AAG59366.1"/>
    <property type="molecule type" value="Genomic_DNA"/>
</dbReference>
<dbReference type="EMBL" id="BA000007">
    <property type="protein sequence ID" value="BAB38569.1"/>
    <property type="molecule type" value="Genomic_DNA"/>
</dbReference>
<dbReference type="PIR" id="B86113">
    <property type="entry name" value="B86113"/>
</dbReference>
<dbReference type="PIR" id="B91272">
    <property type="entry name" value="B91272"/>
</dbReference>
<dbReference type="RefSeq" id="NP_313173.1">
    <property type="nucleotide sequence ID" value="NC_002695.1"/>
</dbReference>
<dbReference type="RefSeq" id="WP_001122477.1">
    <property type="nucleotide sequence ID" value="NZ_SDVX01000004.1"/>
</dbReference>
<dbReference type="SMR" id="Q8XDN4"/>
<dbReference type="STRING" id="155864.Z5777"/>
<dbReference type="GeneID" id="914075"/>
<dbReference type="KEGG" id="ece:Z5777"/>
<dbReference type="KEGG" id="ecs:ECs_5146"/>
<dbReference type="PATRIC" id="fig|386585.9.peg.5379"/>
<dbReference type="eggNOG" id="COG0323">
    <property type="taxonomic scope" value="Bacteria"/>
</dbReference>
<dbReference type="HOGENOM" id="CLU_004131_5_1_6"/>
<dbReference type="Proteomes" id="UP000000558">
    <property type="component" value="Chromosome"/>
</dbReference>
<dbReference type="Proteomes" id="UP000002519">
    <property type="component" value="Chromosome"/>
</dbReference>
<dbReference type="GO" id="GO:0032300">
    <property type="term" value="C:mismatch repair complex"/>
    <property type="evidence" value="ECO:0007669"/>
    <property type="project" value="InterPro"/>
</dbReference>
<dbReference type="GO" id="GO:0005524">
    <property type="term" value="F:ATP binding"/>
    <property type="evidence" value="ECO:0007669"/>
    <property type="project" value="InterPro"/>
</dbReference>
<dbReference type="GO" id="GO:0016887">
    <property type="term" value="F:ATP hydrolysis activity"/>
    <property type="evidence" value="ECO:0007669"/>
    <property type="project" value="InterPro"/>
</dbReference>
<dbReference type="GO" id="GO:0140664">
    <property type="term" value="F:ATP-dependent DNA damage sensor activity"/>
    <property type="evidence" value="ECO:0007669"/>
    <property type="project" value="InterPro"/>
</dbReference>
<dbReference type="GO" id="GO:0030983">
    <property type="term" value="F:mismatched DNA binding"/>
    <property type="evidence" value="ECO:0007669"/>
    <property type="project" value="InterPro"/>
</dbReference>
<dbReference type="GO" id="GO:0006298">
    <property type="term" value="P:mismatch repair"/>
    <property type="evidence" value="ECO:0007669"/>
    <property type="project" value="UniProtKB-UniRule"/>
</dbReference>
<dbReference type="CDD" id="cd16926">
    <property type="entry name" value="HATPase_MutL-MLH-PMS-like"/>
    <property type="match status" value="1"/>
</dbReference>
<dbReference type="CDD" id="cd03482">
    <property type="entry name" value="MutL_Trans_MutL"/>
    <property type="match status" value="1"/>
</dbReference>
<dbReference type="FunFam" id="3.30.230.10:FF:000013">
    <property type="entry name" value="DNA mismatch repair endonuclease MutL"/>
    <property type="match status" value="1"/>
</dbReference>
<dbReference type="FunFam" id="3.30.565.10:FF:000003">
    <property type="entry name" value="DNA mismatch repair endonuclease MutL"/>
    <property type="match status" value="1"/>
</dbReference>
<dbReference type="FunFam" id="3.30.1370.100:FF:000002">
    <property type="entry name" value="DNA mismatch repair protein MutL"/>
    <property type="match status" value="1"/>
</dbReference>
<dbReference type="Gene3D" id="3.30.230.10">
    <property type="match status" value="1"/>
</dbReference>
<dbReference type="Gene3D" id="3.30.565.10">
    <property type="entry name" value="Histidine kinase-like ATPase, C-terminal domain"/>
    <property type="match status" value="1"/>
</dbReference>
<dbReference type="Gene3D" id="3.30.1540.20">
    <property type="entry name" value="MutL, C-terminal domain, dimerisation subdomain"/>
    <property type="match status" value="1"/>
</dbReference>
<dbReference type="Gene3D" id="3.30.1370.100">
    <property type="entry name" value="MutL, C-terminal domain, regulatory subdomain"/>
    <property type="match status" value="1"/>
</dbReference>
<dbReference type="HAMAP" id="MF_00149">
    <property type="entry name" value="DNA_mis_repair"/>
    <property type="match status" value="1"/>
</dbReference>
<dbReference type="InterPro" id="IPR014762">
    <property type="entry name" value="DNA_mismatch_repair_CS"/>
</dbReference>
<dbReference type="InterPro" id="IPR020667">
    <property type="entry name" value="DNA_mismatch_repair_MutL"/>
</dbReference>
<dbReference type="InterPro" id="IPR013507">
    <property type="entry name" value="DNA_mismatch_S5_2-like"/>
</dbReference>
<dbReference type="InterPro" id="IPR036890">
    <property type="entry name" value="HATPase_C_sf"/>
</dbReference>
<dbReference type="InterPro" id="IPR002099">
    <property type="entry name" value="MutL/Mlh/PMS"/>
</dbReference>
<dbReference type="InterPro" id="IPR038973">
    <property type="entry name" value="MutL/Mlh/Pms-like"/>
</dbReference>
<dbReference type="InterPro" id="IPR014790">
    <property type="entry name" value="MutL_C"/>
</dbReference>
<dbReference type="InterPro" id="IPR042120">
    <property type="entry name" value="MutL_C_dimsub"/>
</dbReference>
<dbReference type="InterPro" id="IPR042121">
    <property type="entry name" value="MutL_C_regsub"/>
</dbReference>
<dbReference type="InterPro" id="IPR037198">
    <property type="entry name" value="MutL_C_sf"/>
</dbReference>
<dbReference type="InterPro" id="IPR020568">
    <property type="entry name" value="Ribosomal_Su5_D2-typ_SF"/>
</dbReference>
<dbReference type="InterPro" id="IPR014721">
    <property type="entry name" value="Ribsml_uS5_D2-typ_fold_subgr"/>
</dbReference>
<dbReference type="NCBIfam" id="TIGR00585">
    <property type="entry name" value="mutl"/>
    <property type="match status" value="1"/>
</dbReference>
<dbReference type="NCBIfam" id="NF000948">
    <property type="entry name" value="PRK00095.1-1"/>
    <property type="match status" value="1"/>
</dbReference>
<dbReference type="PANTHER" id="PTHR10073">
    <property type="entry name" value="DNA MISMATCH REPAIR PROTEIN MLH, PMS, MUTL"/>
    <property type="match status" value="1"/>
</dbReference>
<dbReference type="PANTHER" id="PTHR10073:SF12">
    <property type="entry name" value="DNA MISMATCH REPAIR PROTEIN MLH1"/>
    <property type="match status" value="1"/>
</dbReference>
<dbReference type="Pfam" id="PF01119">
    <property type="entry name" value="DNA_mis_repair"/>
    <property type="match status" value="1"/>
</dbReference>
<dbReference type="Pfam" id="PF13589">
    <property type="entry name" value="HATPase_c_3"/>
    <property type="match status" value="1"/>
</dbReference>
<dbReference type="Pfam" id="PF08676">
    <property type="entry name" value="MutL_C"/>
    <property type="match status" value="1"/>
</dbReference>
<dbReference type="SMART" id="SM01340">
    <property type="entry name" value="DNA_mis_repair"/>
    <property type="match status" value="1"/>
</dbReference>
<dbReference type="SMART" id="SM00853">
    <property type="entry name" value="MutL_C"/>
    <property type="match status" value="1"/>
</dbReference>
<dbReference type="SUPFAM" id="SSF55874">
    <property type="entry name" value="ATPase domain of HSP90 chaperone/DNA topoisomerase II/histidine kinase"/>
    <property type="match status" value="1"/>
</dbReference>
<dbReference type="SUPFAM" id="SSF118116">
    <property type="entry name" value="DNA mismatch repair protein MutL"/>
    <property type="match status" value="1"/>
</dbReference>
<dbReference type="SUPFAM" id="SSF54211">
    <property type="entry name" value="Ribosomal protein S5 domain 2-like"/>
    <property type="match status" value="1"/>
</dbReference>
<dbReference type="PROSITE" id="PS00058">
    <property type="entry name" value="DNA_MISMATCH_REPAIR_1"/>
    <property type="match status" value="1"/>
</dbReference>
<keyword id="KW-0227">DNA damage</keyword>
<keyword id="KW-0234">DNA repair</keyword>
<keyword id="KW-1185">Reference proteome</keyword>
<proteinExistence type="inferred from homology"/>
<reference key="1">
    <citation type="journal article" date="2001" name="Nature">
        <title>Genome sequence of enterohaemorrhagic Escherichia coli O157:H7.</title>
        <authorList>
            <person name="Perna N.T."/>
            <person name="Plunkett G. III"/>
            <person name="Burland V."/>
            <person name="Mau B."/>
            <person name="Glasner J.D."/>
            <person name="Rose D.J."/>
            <person name="Mayhew G.F."/>
            <person name="Evans P.S."/>
            <person name="Gregor J."/>
            <person name="Kirkpatrick H.A."/>
            <person name="Posfai G."/>
            <person name="Hackett J."/>
            <person name="Klink S."/>
            <person name="Boutin A."/>
            <person name="Shao Y."/>
            <person name="Miller L."/>
            <person name="Grotbeck E.J."/>
            <person name="Davis N.W."/>
            <person name="Lim A."/>
            <person name="Dimalanta E.T."/>
            <person name="Potamousis K."/>
            <person name="Apodaca J."/>
            <person name="Anantharaman T.S."/>
            <person name="Lin J."/>
            <person name="Yen G."/>
            <person name="Schwartz D.C."/>
            <person name="Welch R.A."/>
            <person name="Blattner F.R."/>
        </authorList>
    </citation>
    <scope>NUCLEOTIDE SEQUENCE [LARGE SCALE GENOMIC DNA]</scope>
    <source>
        <strain>O157:H7 / EDL933 / ATCC 700927 / EHEC</strain>
    </source>
</reference>
<reference key="2">
    <citation type="journal article" date="2001" name="DNA Res.">
        <title>Complete genome sequence of enterohemorrhagic Escherichia coli O157:H7 and genomic comparison with a laboratory strain K-12.</title>
        <authorList>
            <person name="Hayashi T."/>
            <person name="Makino K."/>
            <person name="Ohnishi M."/>
            <person name="Kurokawa K."/>
            <person name="Ishii K."/>
            <person name="Yokoyama K."/>
            <person name="Han C.-G."/>
            <person name="Ohtsubo E."/>
            <person name="Nakayama K."/>
            <person name="Murata T."/>
            <person name="Tanaka M."/>
            <person name="Tobe T."/>
            <person name="Iida T."/>
            <person name="Takami H."/>
            <person name="Honda T."/>
            <person name="Sasakawa C."/>
            <person name="Ogasawara N."/>
            <person name="Yasunaga T."/>
            <person name="Kuhara S."/>
            <person name="Shiba T."/>
            <person name="Hattori M."/>
            <person name="Shinagawa H."/>
        </authorList>
    </citation>
    <scope>NUCLEOTIDE SEQUENCE [LARGE SCALE GENOMIC DNA]</scope>
    <source>
        <strain>O157:H7 / Sakai / RIMD 0509952 / EHEC</strain>
    </source>
</reference>
<protein>
    <recommendedName>
        <fullName evidence="1">DNA mismatch repair protein MutL</fullName>
    </recommendedName>
</protein>
<evidence type="ECO:0000255" key="1">
    <source>
        <dbReference type="HAMAP-Rule" id="MF_00149"/>
    </source>
</evidence>
<evidence type="ECO:0000256" key="2">
    <source>
        <dbReference type="SAM" id="MobiDB-lite"/>
    </source>
</evidence>
<accession>Q8XDN4</accession>
<gene>
    <name evidence="1" type="primary">mutL</name>
    <name type="ordered locus">Z5777</name>
    <name type="ordered locus">ECs5146</name>
</gene>